<reference key="1">
    <citation type="journal article" date="1995" name="Proc. Natl. Acad. Sci. U.S.A.">
        <title>cDNA sequence and expression pattern of the putative pheromone carrier aphrodisin.</title>
        <authorList>
            <person name="Maegert H.-J."/>
            <person name="Hadrys T."/>
            <person name="Cieslak A."/>
            <person name="Groeger A."/>
            <person name="Feller S."/>
            <person name="Forssmann W.-G."/>
        </authorList>
    </citation>
    <scope>NUCLEOTIDE SEQUENCE [MRNA]</scope>
    <source>
        <tissue>Vagina</tissue>
    </source>
</reference>
<reference key="2">
    <citation type="journal article" date="1988" name="J. Biol. Chem.">
        <title>The primary structure of aphrodisin.</title>
        <authorList>
            <person name="Henzel W.J."/>
            <person name="Rodriguez H."/>
            <person name="Singer A.G."/>
            <person name="Stults J.T."/>
            <person name="Macrides F."/>
            <person name="Agosta W.C."/>
            <person name="Niall H."/>
        </authorList>
    </citation>
    <scope>PROTEIN SEQUENCE OF 17-167</scope>
    <scope>DISULFIDE BONDS</scope>
    <scope>PYROGLUTAMATE FORMATION AT GLN-17</scope>
    <scope>GLYCOSYLATION AT ASN-57 AND ASN-85</scope>
</reference>
<reference key="3">
    <citation type="journal article" date="2001" name="J. Mol. Biol.">
        <title>Crystal structure of aphrodisin, a sex pheromone from female hamster.</title>
        <authorList>
            <person name="Vincent F."/>
            <person name="Lobel D."/>
            <person name="Brown K."/>
            <person name="Spinelli S."/>
            <person name="Grote P."/>
            <person name="Breer H."/>
            <person name="Cambillau C."/>
            <person name="Tegoni M."/>
        </authorList>
    </citation>
    <scope>X-RAY CRYSTALLOGRAPHY (1.63 ANGSTROMS) OF 17-167</scope>
</reference>
<evidence type="ECO:0000269" key="1">
    <source>
    </source>
</evidence>
<evidence type="ECO:0000305" key="2"/>
<evidence type="ECO:0007829" key="3">
    <source>
        <dbReference type="PDB" id="1E5P"/>
    </source>
</evidence>
<sequence length="167" mass="18954">MVKILLLALVFSLAHAQDFAELQGKWYTIVIAADNLEKIEEGGPLRFYFRHIDCYKNCSEMEITFYVITNNQCSKTTVIGYLKGNGTYQTQFEGNNIFQPLYITSDKIFFTNKNMDRAGQETNMIVVAGKGNALTPEENEILVQFAHEKKIPVENILNILATDTCPE</sequence>
<dbReference type="EMBL" id="X65238">
    <property type="protein sequence ID" value="CAA46342.1"/>
    <property type="molecule type" value="mRNA"/>
</dbReference>
<dbReference type="PIR" id="I48075">
    <property type="entry name" value="I48075"/>
</dbReference>
<dbReference type="PDB" id="1E5P">
    <property type="method" value="X-ray"/>
    <property type="resolution" value="1.63 A"/>
    <property type="chains" value="A/B/C/D=17-167"/>
</dbReference>
<dbReference type="PDBsum" id="1E5P"/>
<dbReference type="SMR" id="P09465"/>
<dbReference type="iPTMnet" id="P09465"/>
<dbReference type="EvolutionaryTrace" id="P09465"/>
<dbReference type="GO" id="GO:0005615">
    <property type="term" value="C:extracellular space"/>
    <property type="evidence" value="ECO:0007669"/>
    <property type="project" value="TreeGrafter"/>
</dbReference>
<dbReference type="GO" id="GO:0005549">
    <property type="term" value="F:odorant binding"/>
    <property type="evidence" value="ECO:0007669"/>
    <property type="project" value="TreeGrafter"/>
</dbReference>
<dbReference type="GO" id="GO:0036094">
    <property type="term" value="F:small molecule binding"/>
    <property type="evidence" value="ECO:0007669"/>
    <property type="project" value="InterPro"/>
</dbReference>
<dbReference type="CDD" id="cd19427">
    <property type="entry name" value="lipocalin_OBP-like"/>
    <property type="match status" value="1"/>
</dbReference>
<dbReference type="FunFam" id="2.40.128.20:FF:000008">
    <property type="entry name" value="Major urinary protein"/>
    <property type="match status" value="1"/>
</dbReference>
<dbReference type="Gene3D" id="2.40.128.20">
    <property type="match status" value="1"/>
</dbReference>
<dbReference type="InterPro" id="IPR012674">
    <property type="entry name" value="Calycin"/>
</dbReference>
<dbReference type="InterPro" id="IPR002345">
    <property type="entry name" value="Lipocalin"/>
</dbReference>
<dbReference type="InterPro" id="IPR022272">
    <property type="entry name" value="Lipocalin_CS"/>
</dbReference>
<dbReference type="InterPro" id="IPR000566">
    <property type="entry name" value="Lipocln_cytosolic_FA-bd_dom"/>
</dbReference>
<dbReference type="InterPro" id="IPR002448">
    <property type="entry name" value="OBP-like"/>
</dbReference>
<dbReference type="PANTHER" id="PTHR11430">
    <property type="entry name" value="LIPOCALIN"/>
    <property type="match status" value="1"/>
</dbReference>
<dbReference type="PANTHER" id="PTHR11430:SF65">
    <property type="entry name" value="ODORANT-BINDING PROTEIN 1A-RELATED"/>
    <property type="match status" value="1"/>
</dbReference>
<dbReference type="Pfam" id="PF00061">
    <property type="entry name" value="Lipocalin"/>
    <property type="match status" value="1"/>
</dbReference>
<dbReference type="PRINTS" id="PR01173">
    <property type="entry name" value="ODORANTBNDNG"/>
</dbReference>
<dbReference type="SUPFAM" id="SSF50814">
    <property type="entry name" value="Lipocalins"/>
    <property type="match status" value="1"/>
</dbReference>
<dbReference type="PROSITE" id="PS00213">
    <property type="entry name" value="LIPOCALIN"/>
    <property type="match status" value="1"/>
</dbReference>
<name>APHR_CRICR</name>
<organism>
    <name type="scientific">Cricetus cricetus</name>
    <name type="common">Black-bellied hamster</name>
    <dbReference type="NCBI Taxonomy" id="10034"/>
    <lineage>
        <taxon>Eukaryota</taxon>
        <taxon>Metazoa</taxon>
        <taxon>Chordata</taxon>
        <taxon>Craniata</taxon>
        <taxon>Vertebrata</taxon>
        <taxon>Euteleostomi</taxon>
        <taxon>Mammalia</taxon>
        <taxon>Eutheria</taxon>
        <taxon>Euarchontoglires</taxon>
        <taxon>Glires</taxon>
        <taxon>Rodentia</taxon>
        <taxon>Myomorpha</taxon>
        <taxon>Muroidea</taxon>
        <taxon>Cricetidae</taxon>
        <taxon>Cricetinae</taxon>
        <taxon>Cricetus</taxon>
    </lineage>
</organism>
<comment type="function">
    <text>Acts as an aphrodisiac pheromone, reliably eliciting copulatory behavior from male hamster.</text>
</comment>
<comment type="subcellular location">
    <subcellularLocation>
        <location>Secreted</location>
    </subcellularLocation>
</comment>
<comment type="tissue specificity">
    <text>Expressed in the vagina, uterus, and Bartholin's glands of female hamsters. Secreted in vaginal discharge.</text>
</comment>
<comment type="similarity">
    <text evidence="2">Belongs to the calycin superfamily. Lipocalin family.</text>
</comment>
<feature type="signal peptide" evidence="1">
    <location>
        <begin position="1"/>
        <end position="16"/>
    </location>
</feature>
<feature type="chain" id="PRO_0000017878" description="Aphrodisin" evidence="1">
    <location>
        <begin position="17"/>
        <end position="167"/>
    </location>
</feature>
<feature type="modified residue" description="Pyrrolidone carboxylic acid" evidence="1">
    <location>
        <position position="17"/>
    </location>
</feature>
<feature type="glycosylation site" description="N-linked (GlcNAc...) asparagine" evidence="1">
    <location>
        <position position="57"/>
    </location>
</feature>
<feature type="glycosylation site" description="N-linked (GlcNAc...) asparagine" evidence="1">
    <location>
        <position position="85"/>
    </location>
</feature>
<feature type="disulfide bond" evidence="1">
    <location>
        <begin position="54"/>
        <end position="58"/>
    </location>
</feature>
<feature type="disulfide bond" evidence="1">
    <location>
        <begin position="73"/>
        <end position="165"/>
    </location>
</feature>
<feature type="helix" evidence="3">
    <location>
        <begin position="20"/>
        <end position="22"/>
    </location>
</feature>
<feature type="strand" evidence="3">
    <location>
        <begin position="27"/>
        <end position="35"/>
    </location>
</feature>
<feature type="helix" evidence="3">
    <location>
        <begin position="36"/>
        <end position="38"/>
    </location>
</feature>
<feature type="strand" evidence="3">
    <location>
        <begin position="48"/>
        <end position="55"/>
    </location>
</feature>
<feature type="turn" evidence="3">
    <location>
        <begin position="56"/>
        <end position="59"/>
    </location>
</feature>
<feature type="strand" evidence="3">
    <location>
        <begin position="60"/>
        <end position="69"/>
    </location>
</feature>
<feature type="strand" evidence="3">
    <location>
        <begin position="72"/>
        <end position="83"/>
    </location>
</feature>
<feature type="strand" evidence="3">
    <location>
        <begin position="88"/>
        <end position="103"/>
    </location>
</feature>
<feature type="strand" evidence="3">
    <location>
        <begin position="105"/>
        <end position="115"/>
    </location>
</feature>
<feature type="strand" evidence="3">
    <location>
        <begin position="121"/>
        <end position="132"/>
    </location>
</feature>
<feature type="helix" evidence="3">
    <location>
        <begin position="136"/>
        <end position="148"/>
    </location>
</feature>
<feature type="helix" evidence="3">
    <location>
        <begin position="153"/>
        <end position="155"/>
    </location>
</feature>
<feature type="strand" evidence="3">
    <location>
        <begin position="156"/>
        <end position="158"/>
    </location>
</feature>
<feature type="helix" evidence="3">
    <location>
        <begin position="160"/>
        <end position="162"/>
    </location>
</feature>
<accession>P09465</accession>
<protein>
    <recommendedName>
        <fullName>Aphrodisin</fullName>
    </recommendedName>
</protein>
<proteinExistence type="evidence at protein level"/>
<keyword id="KW-0002">3D-structure</keyword>
<keyword id="KW-0903">Direct protein sequencing</keyword>
<keyword id="KW-1015">Disulfide bond</keyword>
<keyword id="KW-0325">Glycoprotein</keyword>
<keyword id="KW-0873">Pyrrolidone carboxylic acid</keyword>
<keyword id="KW-0964">Secreted</keyword>
<keyword id="KW-0732">Signal</keyword>